<name>DCDB_NOCFA</name>
<feature type="chain" id="PRO_1000009774" description="dCTP deaminase, dUMP-forming">
    <location>
        <begin position="1"/>
        <end position="199"/>
    </location>
</feature>
<feature type="region of interest" description="Disordered" evidence="2">
    <location>
        <begin position="163"/>
        <end position="199"/>
    </location>
</feature>
<feature type="compositionally biased region" description="Polar residues" evidence="2">
    <location>
        <begin position="171"/>
        <end position="183"/>
    </location>
</feature>
<feature type="active site" description="Proton donor/acceptor" evidence="1">
    <location>
        <position position="129"/>
    </location>
</feature>
<feature type="binding site" evidence="1">
    <location>
        <begin position="101"/>
        <end position="106"/>
    </location>
    <ligand>
        <name>dCTP</name>
        <dbReference type="ChEBI" id="CHEBI:61481"/>
    </ligand>
</feature>
<feature type="binding site" evidence="1">
    <location>
        <position position="119"/>
    </location>
    <ligand>
        <name>dCTP</name>
        <dbReference type="ChEBI" id="CHEBI:61481"/>
    </ligand>
</feature>
<feature type="binding site" evidence="1">
    <location>
        <begin position="127"/>
        <end position="129"/>
    </location>
    <ligand>
        <name>dCTP</name>
        <dbReference type="ChEBI" id="CHEBI:61481"/>
    </ligand>
</feature>
<feature type="binding site" evidence="1">
    <location>
        <position position="148"/>
    </location>
    <ligand>
        <name>dCTP</name>
        <dbReference type="ChEBI" id="CHEBI:61481"/>
    </ligand>
</feature>
<feature type="binding site" evidence="1">
    <location>
        <position position="162"/>
    </location>
    <ligand>
        <name>dCTP</name>
        <dbReference type="ChEBI" id="CHEBI:61481"/>
    </ligand>
</feature>
<feature type="binding site" evidence="1">
    <location>
        <position position="174"/>
    </location>
    <ligand>
        <name>dCTP</name>
        <dbReference type="ChEBI" id="CHEBI:61481"/>
    </ligand>
</feature>
<feature type="site" description="Important for bifunctional activity" evidence="1">
    <location>
        <begin position="116"/>
        <end position="117"/>
    </location>
</feature>
<proteinExistence type="inferred from homology"/>
<accession>Q5YNG0</accession>
<gene>
    <name evidence="1" type="primary">dcd</name>
    <name type="ordered locus">NFA_54290</name>
</gene>
<reference key="1">
    <citation type="journal article" date="2004" name="Proc. Natl. Acad. Sci. U.S.A.">
        <title>The complete genomic sequence of Nocardia farcinica IFM 10152.</title>
        <authorList>
            <person name="Ishikawa J."/>
            <person name="Yamashita A."/>
            <person name="Mikami Y."/>
            <person name="Hoshino Y."/>
            <person name="Kurita H."/>
            <person name="Hotta K."/>
            <person name="Shiba T."/>
            <person name="Hattori M."/>
        </authorList>
    </citation>
    <scope>NUCLEOTIDE SEQUENCE [LARGE SCALE GENOMIC DNA]</scope>
    <source>
        <strain>IFM 10152</strain>
    </source>
</reference>
<organism>
    <name type="scientific">Nocardia farcinica (strain IFM 10152)</name>
    <dbReference type="NCBI Taxonomy" id="247156"/>
    <lineage>
        <taxon>Bacteria</taxon>
        <taxon>Bacillati</taxon>
        <taxon>Actinomycetota</taxon>
        <taxon>Actinomycetes</taxon>
        <taxon>Mycobacteriales</taxon>
        <taxon>Nocardiaceae</taxon>
        <taxon>Nocardia</taxon>
    </lineage>
</organism>
<comment type="function">
    <text evidence="1">Bifunctional enzyme that catalyzes both the deamination of dCTP to dUTP and the hydrolysis of dUTP to dUMP without releasing the toxic dUTP intermediate.</text>
</comment>
<comment type="catalytic activity">
    <reaction evidence="1">
        <text>dCTP + 2 H2O = dUMP + NH4(+) + diphosphate</text>
        <dbReference type="Rhea" id="RHEA:19205"/>
        <dbReference type="ChEBI" id="CHEBI:15377"/>
        <dbReference type="ChEBI" id="CHEBI:28938"/>
        <dbReference type="ChEBI" id="CHEBI:33019"/>
        <dbReference type="ChEBI" id="CHEBI:61481"/>
        <dbReference type="ChEBI" id="CHEBI:246422"/>
        <dbReference type="EC" id="3.5.4.30"/>
    </reaction>
</comment>
<comment type="pathway">
    <text evidence="1">Pyrimidine metabolism; dUMP biosynthesis; dUMP from dCTP: step 1/1.</text>
</comment>
<comment type="subunit">
    <text evidence="1">Homotrimer.</text>
</comment>
<comment type="similarity">
    <text evidence="1">Belongs to the dCTP deaminase family.</text>
</comment>
<dbReference type="EC" id="3.5.4.30" evidence="1"/>
<dbReference type="EMBL" id="AP006618">
    <property type="protein sequence ID" value="BAD60281.1"/>
    <property type="molecule type" value="Genomic_DNA"/>
</dbReference>
<dbReference type="RefSeq" id="WP_011211963.1">
    <property type="nucleotide sequence ID" value="NC_006361.1"/>
</dbReference>
<dbReference type="SMR" id="Q5YNG0"/>
<dbReference type="STRING" id="247156.NFA_54290"/>
<dbReference type="GeneID" id="61135999"/>
<dbReference type="KEGG" id="nfa:NFA_54290"/>
<dbReference type="eggNOG" id="COG0717">
    <property type="taxonomic scope" value="Bacteria"/>
</dbReference>
<dbReference type="HOGENOM" id="CLU_087476_2_1_11"/>
<dbReference type="OrthoDB" id="9780956at2"/>
<dbReference type="UniPathway" id="UPA00610">
    <property type="reaction ID" value="UER00667"/>
</dbReference>
<dbReference type="Proteomes" id="UP000006820">
    <property type="component" value="Chromosome"/>
</dbReference>
<dbReference type="GO" id="GO:0033973">
    <property type="term" value="F:dCTP deaminase (dUMP-forming) activity"/>
    <property type="evidence" value="ECO:0007669"/>
    <property type="project" value="UniProtKB-UniRule"/>
</dbReference>
<dbReference type="GO" id="GO:0008829">
    <property type="term" value="F:dCTP deaminase activity"/>
    <property type="evidence" value="ECO:0007669"/>
    <property type="project" value="InterPro"/>
</dbReference>
<dbReference type="GO" id="GO:0000166">
    <property type="term" value="F:nucleotide binding"/>
    <property type="evidence" value="ECO:0007669"/>
    <property type="project" value="UniProtKB-KW"/>
</dbReference>
<dbReference type="GO" id="GO:0006226">
    <property type="term" value="P:dUMP biosynthetic process"/>
    <property type="evidence" value="ECO:0007669"/>
    <property type="project" value="UniProtKB-UniRule"/>
</dbReference>
<dbReference type="GO" id="GO:0006229">
    <property type="term" value="P:dUTP biosynthetic process"/>
    <property type="evidence" value="ECO:0007669"/>
    <property type="project" value="InterPro"/>
</dbReference>
<dbReference type="GO" id="GO:0015949">
    <property type="term" value="P:nucleobase-containing small molecule interconversion"/>
    <property type="evidence" value="ECO:0007669"/>
    <property type="project" value="TreeGrafter"/>
</dbReference>
<dbReference type="CDD" id="cd07557">
    <property type="entry name" value="trimeric_dUTPase"/>
    <property type="match status" value="1"/>
</dbReference>
<dbReference type="FunFam" id="2.70.40.10:FF:000005">
    <property type="entry name" value="dCTP deaminase, dUMP-forming"/>
    <property type="match status" value="1"/>
</dbReference>
<dbReference type="Gene3D" id="2.70.40.10">
    <property type="match status" value="1"/>
</dbReference>
<dbReference type="HAMAP" id="MF_00146">
    <property type="entry name" value="dCTP_deaminase"/>
    <property type="match status" value="1"/>
</dbReference>
<dbReference type="InterPro" id="IPR011962">
    <property type="entry name" value="dCTP_deaminase"/>
</dbReference>
<dbReference type="InterPro" id="IPR036157">
    <property type="entry name" value="dUTPase-like_sf"/>
</dbReference>
<dbReference type="InterPro" id="IPR033704">
    <property type="entry name" value="dUTPase_trimeric"/>
</dbReference>
<dbReference type="NCBIfam" id="TIGR02274">
    <property type="entry name" value="dCTP_deam"/>
    <property type="match status" value="1"/>
</dbReference>
<dbReference type="PANTHER" id="PTHR42680">
    <property type="entry name" value="DCTP DEAMINASE"/>
    <property type="match status" value="1"/>
</dbReference>
<dbReference type="PANTHER" id="PTHR42680:SF3">
    <property type="entry name" value="DCTP DEAMINASE"/>
    <property type="match status" value="1"/>
</dbReference>
<dbReference type="Pfam" id="PF22769">
    <property type="entry name" value="DCD"/>
    <property type="match status" value="1"/>
</dbReference>
<dbReference type="SUPFAM" id="SSF51283">
    <property type="entry name" value="dUTPase-like"/>
    <property type="match status" value="1"/>
</dbReference>
<sequence>MLLSDRDIRAEIAAGRLGVEPLLENLIQPSSIDVRLDRMFRVFDNSRYTHIDPAQRQDELTSLVEPGEGEPFVLHPGEFVLGSTLEVCTLPDDLAGRLEGKSSLGRLGLLTHSTAGFIDPGFSGHITLELSNVANLPITLWPGMKIGQLCLFRLSSPAEHPYGSAAAGSKYQGQRGPTPSRSYLNFPLPSDAVDAVESR</sequence>
<protein>
    <recommendedName>
        <fullName evidence="1">dCTP deaminase, dUMP-forming</fullName>
        <ecNumber evidence="1">3.5.4.30</ecNumber>
    </recommendedName>
    <alternativeName>
        <fullName evidence="1">Bifunctional dCTP deaminase:dUTPase</fullName>
    </alternativeName>
    <alternativeName>
        <fullName evidence="1">DCD-DUT</fullName>
    </alternativeName>
</protein>
<keyword id="KW-0378">Hydrolase</keyword>
<keyword id="KW-0546">Nucleotide metabolism</keyword>
<keyword id="KW-0547">Nucleotide-binding</keyword>
<keyword id="KW-1185">Reference proteome</keyword>
<evidence type="ECO:0000255" key="1">
    <source>
        <dbReference type="HAMAP-Rule" id="MF_00146"/>
    </source>
</evidence>
<evidence type="ECO:0000256" key="2">
    <source>
        <dbReference type="SAM" id="MobiDB-lite"/>
    </source>
</evidence>